<sequence length="44" mass="5067">MKRTFQPSTIKRARTHGFRARMATKNGRAVLSRRRAKGRARLAV</sequence>
<reference key="1">
    <citation type="journal article" date="2005" name="Nat. Biotechnol.">
        <title>Complete genome sequence of the plant commensal Pseudomonas fluorescens Pf-5.</title>
        <authorList>
            <person name="Paulsen I.T."/>
            <person name="Press C.M."/>
            <person name="Ravel J."/>
            <person name="Kobayashi D.Y."/>
            <person name="Myers G.S.A."/>
            <person name="Mavrodi D.V."/>
            <person name="DeBoy R.T."/>
            <person name="Seshadri R."/>
            <person name="Ren Q."/>
            <person name="Madupu R."/>
            <person name="Dodson R.J."/>
            <person name="Durkin A.S."/>
            <person name="Brinkac L.M."/>
            <person name="Daugherty S.C."/>
            <person name="Sullivan S.A."/>
            <person name="Rosovitz M.J."/>
            <person name="Gwinn M.L."/>
            <person name="Zhou L."/>
            <person name="Schneider D.J."/>
            <person name="Cartinhour S.W."/>
            <person name="Nelson W.C."/>
            <person name="Weidman J."/>
            <person name="Watkins K."/>
            <person name="Tran K."/>
            <person name="Khouri H."/>
            <person name="Pierson E.A."/>
            <person name="Pierson L.S. III"/>
            <person name="Thomashow L.S."/>
            <person name="Loper J.E."/>
        </authorList>
    </citation>
    <scope>NUCLEOTIDE SEQUENCE [LARGE SCALE GENOMIC DNA]</scope>
    <source>
        <strain>ATCC BAA-477 / NRRL B-23932 / Pf-5</strain>
    </source>
</reference>
<gene>
    <name evidence="1" type="primary">rpmH</name>
    <name type="ordered locus">PFL_6231</name>
</gene>
<comment type="similarity">
    <text evidence="1">Belongs to the bacterial ribosomal protein bL34 family.</text>
</comment>
<dbReference type="EMBL" id="CP000076">
    <property type="protein sequence ID" value="AAY96269.1"/>
    <property type="molecule type" value="Genomic_DNA"/>
</dbReference>
<dbReference type="RefSeq" id="WP_003213577.1">
    <property type="nucleotide sequence ID" value="NC_004129.6"/>
</dbReference>
<dbReference type="SMR" id="Q4K394"/>
<dbReference type="STRING" id="220664.PFL_6231"/>
<dbReference type="GeneID" id="98108529"/>
<dbReference type="KEGG" id="pfl:PFL_6231"/>
<dbReference type="eggNOG" id="COG0230">
    <property type="taxonomic scope" value="Bacteria"/>
</dbReference>
<dbReference type="HOGENOM" id="CLU_129938_2_0_6"/>
<dbReference type="Proteomes" id="UP000008540">
    <property type="component" value="Chromosome"/>
</dbReference>
<dbReference type="GO" id="GO:1990904">
    <property type="term" value="C:ribonucleoprotein complex"/>
    <property type="evidence" value="ECO:0007669"/>
    <property type="project" value="UniProtKB-KW"/>
</dbReference>
<dbReference type="GO" id="GO:0005840">
    <property type="term" value="C:ribosome"/>
    <property type="evidence" value="ECO:0007669"/>
    <property type="project" value="UniProtKB-KW"/>
</dbReference>
<dbReference type="GO" id="GO:0003735">
    <property type="term" value="F:structural constituent of ribosome"/>
    <property type="evidence" value="ECO:0007669"/>
    <property type="project" value="InterPro"/>
</dbReference>
<dbReference type="GO" id="GO:0006412">
    <property type="term" value="P:translation"/>
    <property type="evidence" value="ECO:0007669"/>
    <property type="project" value="UniProtKB-UniRule"/>
</dbReference>
<dbReference type="FunFam" id="1.10.287.3980:FF:000001">
    <property type="entry name" value="Mitochondrial ribosomal protein L34"/>
    <property type="match status" value="1"/>
</dbReference>
<dbReference type="Gene3D" id="1.10.287.3980">
    <property type="match status" value="1"/>
</dbReference>
<dbReference type="HAMAP" id="MF_00391">
    <property type="entry name" value="Ribosomal_bL34"/>
    <property type="match status" value="1"/>
</dbReference>
<dbReference type="InterPro" id="IPR000271">
    <property type="entry name" value="Ribosomal_bL34"/>
</dbReference>
<dbReference type="InterPro" id="IPR020939">
    <property type="entry name" value="Ribosomal_bL34_CS"/>
</dbReference>
<dbReference type="NCBIfam" id="TIGR01030">
    <property type="entry name" value="rpmH_bact"/>
    <property type="match status" value="1"/>
</dbReference>
<dbReference type="PANTHER" id="PTHR14503:SF4">
    <property type="entry name" value="LARGE RIBOSOMAL SUBUNIT PROTEIN BL34M"/>
    <property type="match status" value="1"/>
</dbReference>
<dbReference type="PANTHER" id="PTHR14503">
    <property type="entry name" value="MITOCHONDRIAL RIBOSOMAL PROTEIN 34 FAMILY MEMBER"/>
    <property type="match status" value="1"/>
</dbReference>
<dbReference type="Pfam" id="PF00468">
    <property type="entry name" value="Ribosomal_L34"/>
    <property type="match status" value="1"/>
</dbReference>
<dbReference type="PROSITE" id="PS00784">
    <property type="entry name" value="RIBOSOMAL_L34"/>
    <property type="match status" value="1"/>
</dbReference>
<feature type="chain" id="PRO_1000013409" description="Large ribosomal subunit protein bL34">
    <location>
        <begin position="1"/>
        <end position="44"/>
    </location>
</feature>
<name>RL34_PSEF5</name>
<accession>Q4K394</accession>
<organism>
    <name type="scientific">Pseudomonas fluorescens (strain ATCC BAA-477 / NRRL B-23932 / Pf-5)</name>
    <dbReference type="NCBI Taxonomy" id="220664"/>
    <lineage>
        <taxon>Bacteria</taxon>
        <taxon>Pseudomonadati</taxon>
        <taxon>Pseudomonadota</taxon>
        <taxon>Gammaproteobacteria</taxon>
        <taxon>Pseudomonadales</taxon>
        <taxon>Pseudomonadaceae</taxon>
        <taxon>Pseudomonas</taxon>
    </lineage>
</organism>
<protein>
    <recommendedName>
        <fullName evidence="1">Large ribosomal subunit protein bL34</fullName>
    </recommendedName>
    <alternativeName>
        <fullName evidence="2">50S ribosomal protein L34</fullName>
    </alternativeName>
</protein>
<proteinExistence type="inferred from homology"/>
<keyword id="KW-0687">Ribonucleoprotein</keyword>
<keyword id="KW-0689">Ribosomal protein</keyword>
<evidence type="ECO:0000255" key="1">
    <source>
        <dbReference type="HAMAP-Rule" id="MF_00391"/>
    </source>
</evidence>
<evidence type="ECO:0000305" key="2"/>